<sequence>MSVEAYGPSSQTLTFLDTEETELLGADTQGSEYDFTDFTLPSQTQTQGHTQSQLDNQLNGPDDGLHNGGMDDSVAKASQLLAELNFEEDEEDTYYTKDLPVHACRSYCGIHDPACVVYCNTSKKWFCNGRGNTSGSHIVNHLVRAKCKEVTLHKDGPLGETVLECYNCGCRNVFLLGFIPAKADSVVVLLCRQPCASQSSLKDINWDSSQWQPLIQDRCFLSWLVKIPSEQEQLRARQITAQQINKLEELWKDNPCATLEDLEKPGVDEEPQHVLLRYEDAYQYQNIFGPLVKLEADYDKKLKESQTQDNITVRWDLGLNKKRIAYFTLPKTDSDMRLMQGDEICLRYKGDLAPLWKGIGHVIKVPDSYGDEIAIELRTSVGAPVEIPHNYQVDFVWKSTSFDRMQSALKTFAVDETSVSGYIYHKLLGHEVEDVTIKCQLPKRFTANGLPDLNHSQVYAVKTVLQRPLSLIQGPPGTGKTVTSATIVYHLSRQGNGPVLVCAPSNIAVDQLTEKIDKTGLKVVRLCAKSREAIESPVSFLALHNQISNMDSMPELQKLQQLKDETGELSSADEKRYRALKRTAERELLMNADVIWCTCVRAGDPRLAKMQFRSILIDESTQATEPKCIGPVELGAKQLILGEITASWSCVMCKKAAKAGLSQSLFERLVVLGIRPIRLQVQYRMHPALSAFPSNIFYEGSLQNGVTAGDRIKKGFDFQWPQPEKPMFFYVTQGQEEIASSGTSYLNRTEAANVEKITTRLLKAGAKPDQIGIITPYEGQRSYLVQYMQFSGSLHTKLYQVEIASVDAFQGREKDFIILSCVRANEHQGIGFLNDPRRLNVALTRAKYGVIIVGNPKALSKQPLWNNLLNNYKEQKVLVEGPLNNLRESLMQFSKPRKLVNTINPRFMSTAMYDAREALIPGSAYDRSNTGGRPSNMYFQTHDQIGMIGAAASHLAALNIPIPFNLVMPPMPPPSYQGQTNGPAAGRGAMKGKSGRGGRQRIQWFWEPGGWSHAKQSDQPGWGFPVILSGATDTGLHLHEPAFPDEPARTLPARALPWDSYLGDEFKSQIDVALSQDSTYQGERAYQHGGVTGLSQY</sequence>
<name>RENT1_TAKRU</name>
<gene>
    <name type="primary">rent1</name>
</gene>
<feature type="chain" id="PRO_0000080718" description="Putative regulator of nonsense transcripts 1">
    <location>
        <begin position="1"/>
        <end position="1097"/>
    </location>
</feature>
<feature type="domain" description="Upf1 CH-rich" evidence="4">
    <location>
        <begin position="96"/>
        <end position="254"/>
    </location>
</feature>
<feature type="region of interest" description="Disordered" evidence="5">
    <location>
        <begin position="42"/>
        <end position="67"/>
    </location>
</feature>
<feature type="region of interest" description="C3H" evidence="4">
    <location>
        <begin position="104"/>
        <end position="137"/>
    </location>
</feature>
<feature type="region of interest" description="CC/SHH/C" evidence="4">
    <location>
        <begin position="119"/>
        <end position="147"/>
    </location>
</feature>
<feature type="region of interest" description="C4" evidence="4">
    <location>
        <begin position="165"/>
        <end position="195"/>
    </location>
</feature>
<feature type="region of interest" description="Disordered" evidence="5">
    <location>
        <begin position="977"/>
        <end position="998"/>
    </location>
</feature>
<feature type="compositionally biased region" description="Low complexity" evidence="5">
    <location>
        <begin position="42"/>
        <end position="53"/>
    </location>
</feature>
<feature type="binding site" evidence="4">
    <location>
        <position position="104"/>
    </location>
    <ligand>
        <name>Zn(2+)</name>
        <dbReference type="ChEBI" id="CHEBI:29105"/>
        <label>1</label>
    </ligand>
</feature>
<feature type="binding site" evidence="4">
    <location>
        <position position="108"/>
    </location>
    <ligand>
        <name>Zn(2+)</name>
        <dbReference type="ChEBI" id="CHEBI:29105"/>
        <label>1</label>
    </ligand>
</feature>
<feature type="binding site" evidence="4">
    <location>
        <position position="119"/>
    </location>
    <ligand>
        <name>Zn(2+)</name>
        <dbReference type="ChEBI" id="CHEBI:29105"/>
        <label>2</label>
    </ligand>
</feature>
<feature type="binding site" evidence="4">
    <location>
        <position position="122"/>
    </location>
    <ligand>
        <name>Zn(2+)</name>
        <dbReference type="ChEBI" id="CHEBI:29105"/>
        <label>2</label>
    </ligand>
</feature>
<feature type="binding site" evidence="4">
    <location>
        <position position="127"/>
    </location>
    <ligand>
        <name>Zn(2+)</name>
        <dbReference type="ChEBI" id="CHEBI:29105"/>
        <label>1</label>
    </ligand>
</feature>
<feature type="binding site" evidence="4">
    <location>
        <position position="137"/>
    </location>
    <ligand>
        <name>Zn(2+)</name>
        <dbReference type="ChEBI" id="CHEBI:29105"/>
        <label>1</label>
    </ligand>
</feature>
<feature type="binding site" evidence="4">
    <location>
        <position position="141"/>
    </location>
    <ligand>
        <name>Zn(2+)</name>
        <dbReference type="ChEBI" id="CHEBI:29105"/>
        <label>2</label>
    </ligand>
</feature>
<feature type="binding site" evidence="4">
    <location>
        <position position="147"/>
    </location>
    <ligand>
        <name>Zn(2+)</name>
        <dbReference type="ChEBI" id="CHEBI:29105"/>
        <label>2</label>
    </ligand>
</feature>
<feature type="binding site" evidence="4">
    <location>
        <position position="165"/>
    </location>
    <ligand>
        <name>Zn(2+)</name>
        <dbReference type="ChEBI" id="CHEBI:29105"/>
        <label>3</label>
    </ligand>
</feature>
<feature type="binding site" evidence="4">
    <location>
        <position position="168"/>
    </location>
    <ligand>
        <name>Zn(2+)</name>
        <dbReference type="ChEBI" id="CHEBI:29105"/>
        <label>3</label>
    </ligand>
</feature>
<feature type="binding site" evidence="4">
    <location>
        <position position="191"/>
    </location>
    <ligand>
        <name>Zn(2+)</name>
        <dbReference type="ChEBI" id="CHEBI:29105"/>
        <label>3</label>
    </ligand>
</feature>
<feature type="binding site" evidence="4">
    <location>
        <position position="195"/>
    </location>
    <ligand>
        <name>Zn(2+)</name>
        <dbReference type="ChEBI" id="CHEBI:29105"/>
        <label>3</label>
    </ligand>
</feature>
<feature type="binding site" evidence="2">
    <location>
        <position position="457"/>
    </location>
    <ligand>
        <name>ATP</name>
        <dbReference type="ChEBI" id="CHEBI:30616"/>
    </ligand>
</feature>
<feature type="binding site" evidence="3">
    <location>
        <begin position="474"/>
        <end position="481"/>
    </location>
    <ligand>
        <name>ATP</name>
        <dbReference type="ChEBI" id="CHEBI:30616"/>
    </ligand>
</feature>
<feature type="binding site" evidence="2">
    <location>
        <position position="683"/>
    </location>
    <ligand>
        <name>ATP</name>
        <dbReference type="ChEBI" id="CHEBI:30616"/>
    </ligand>
</feature>
<feature type="binding site" evidence="2">
    <location>
        <position position="813"/>
    </location>
    <ligand>
        <name>ATP</name>
        <dbReference type="ChEBI" id="CHEBI:30616"/>
    </ligand>
</feature>
<accession>Q98TR3</accession>
<organism>
    <name type="scientific">Takifugu rubripes</name>
    <name type="common">Japanese pufferfish</name>
    <name type="synonym">Fugu rubripes</name>
    <dbReference type="NCBI Taxonomy" id="31033"/>
    <lineage>
        <taxon>Eukaryota</taxon>
        <taxon>Metazoa</taxon>
        <taxon>Chordata</taxon>
        <taxon>Craniata</taxon>
        <taxon>Vertebrata</taxon>
        <taxon>Euteleostomi</taxon>
        <taxon>Actinopterygii</taxon>
        <taxon>Neopterygii</taxon>
        <taxon>Teleostei</taxon>
        <taxon>Neoteleostei</taxon>
        <taxon>Acanthomorphata</taxon>
        <taxon>Eupercaria</taxon>
        <taxon>Tetraodontiformes</taxon>
        <taxon>Tetradontoidea</taxon>
        <taxon>Tetraodontidae</taxon>
        <taxon>Takifugu</taxon>
    </lineage>
</organism>
<evidence type="ECO:0000250" key="1"/>
<evidence type="ECO:0000250" key="2">
    <source>
        <dbReference type="UniProtKB" id="Q92900"/>
    </source>
</evidence>
<evidence type="ECO:0000255" key="3">
    <source>
        <dbReference type="PROSITE-ProRule" id="PRU00499"/>
    </source>
</evidence>
<evidence type="ECO:0000255" key="4">
    <source>
        <dbReference type="PROSITE-ProRule" id="PRU01341"/>
    </source>
</evidence>
<evidence type="ECO:0000256" key="5">
    <source>
        <dbReference type="SAM" id="MobiDB-lite"/>
    </source>
</evidence>
<evidence type="ECO:0000305" key="6"/>
<comment type="function">
    <text evidence="2">RNA-dependent helicase required for nonsense-mediated decay (NMD) of aberrant mRNAs containing premature stop codons and modulates the expression level of normal mRNAs. The formation of an rent1-rent2-rent3 surveillance complex is believed to activate NMD (By similarity).</text>
</comment>
<comment type="catalytic activity">
    <reaction evidence="2">
        <text>ATP + H2O = ADP + phosphate + H(+)</text>
        <dbReference type="Rhea" id="RHEA:13065"/>
        <dbReference type="ChEBI" id="CHEBI:15377"/>
        <dbReference type="ChEBI" id="CHEBI:15378"/>
        <dbReference type="ChEBI" id="CHEBI:30616"/>
        <dbReference type="ChEBI" id="CHEBI:43474"/>
        <dbReference type="ChEBI" id="CHEBI:456216"/>
        <dbReference type="EC" id="3.6.4.12"/>
    </reaction>
    <physiologicalReaction direction="left-to-right" evidence="2">
        <dbReference type="Rhea" id="RHEA:13066"/>
    </physiologicalReaction>
</comment>
<comment type="catalytic activity">
    <reaction evidence="2">
        <text>ATP + H2O = ADP + phosphate + H(+)</text>
        <dbReference type="Rhea" id="RHEA:13065"/>
        <dbReference type="ChEBI" id="CHEBI:15377"/>
        <dbReference type="ChEBI" id="CHEBI:15378"/>
        <dbReference type="ChEBI" id="CHEBI:30616"/>
        <dbReference type="ChEBI" id="CHEBI:43474"/>
        <dbReference type="ChEBI" id="CHEBI:456216"/>
        <dbReference type="EC" id="3.6.4.13"/>
    </reaction>
    <physiologicalReaction direction="left-to-right" evidence="2">
        <dbReference type="Rhea" id="RHEA:13066"/>
    </physiologicalReaction>
</comment>
<comment type="subcellular location">
    <subcellularLocation>
        <location evidence="1">Cytoplasm</location>
    </subcellularLocation>
    <subcellularLocation>
        <location evidence="1">Cytoplasm</location>
        <location evidence="1">P-body</location>
    </subcellularLocation>
</comment>
<comment type="similarity">
    <text evidence="6">Belongs to the DNA2/NAM7 helicase family.</text>
</comment>
<protein>
    <recommendedName>
        <fullName>Putative regulator of nonsense transcripts 1</fullName>
        <ecNumber evidence="2">3.6.4.12</ecNumber>
        <ecNumber evidence="2">3.6.4.13</ecNumber>
    </recommendedName>
    <alternativeName>
        <fullName>ATP-dependent helicase RENT1</fullName>
    </alternativeName>
</protein>
<dbReference type="EC" id="3.6.4.12" evidence="2"/>
<dbReference type="EC" id="3.6.4.13" evidence="2"/>
<dbReference type="EMBL" id="AJ301641">
    <property type="protein sequence ID" value="CAC33025.1"/>
    <property type="molecule type" value="Genomic_DNA"/>
</dbReference>
<dbReference type="SMR" id="Q98TR3"/>
<dbReference type="STRING" id="31033.ENSTRUP00000012294"/>
<dbReference type="eggNOG" id="KOG1802">
    <property type="taxonomic scope" value="Eukaryota"/>
</dbReference>
<dbReference type="InParanoid" id="Q98TR3"/>
<dbReference type="Proteomes" id="UP000005226">
    <property type="component" value="Unplaced"/>
</dbReference>
<dbReference type="GO" id="GO:0000932">
    <property type="term" value="C:P-body"/>
    <property type="evidence" value="ECO:0007669"/>
    <property type="project" value="UniProtKB-SubCell"/>
</dbReference>
<dbReference type="GO" id="GO:0005524">
    <property type="term" value="F:ATP binding"/>
    <property type="evidence" value="ECO:0007669"/>
    <property type="project" value="UniProtKB-KW"/>
</dbReference>
<dbReference type="GO" id="GO:0016887">
    <property type="term" value="F:ATP hydrolysis activity"/>
    <property type="evidence" value="ECO:0007669"/>
    <property type="project" value="RHEA"/>
</dbReference>
<dbReference type="GO" id="GO:0003723">
    <property type="term" value="F:RNA binding"/>
    <property type="evidence" value="ECO:0007669"/>
    <property type="project" value="UniProtKB-KW"/>
</dbReference>
<dbReference type="GO" id="GO:0003724">
    <property type="term" value="F:RNA helicase activity"/>
    <property type="evidence" value="ECO:0007669"/>
    <property type="project" value="InterPro"/>
</dbReference>
<dbReference type="GO" id="GO:0008270">
    <property type="term" value="F:zinc ion binding"/>
    <property type="evidence" value="ECO:0007669"/>
    <property type="project" value="UniProtKB-KW"/>
</dbReference>
<dbReference type="GO" id="GO:0000184">
    <property type="term" value="P:nuclear-transcribed mRNA catabolic process, nonsense-mediated decay"/>
    <property type="evidence" value="ECO:0007669"/>
    <property type="project" value="UniProtKB-KW"/>
</dbReference>
<dbReference type="CDD" id="cd21407">
    <property type="entry name" value="1B_UPF1-like"/>
    <property type="match status" value="1"/>
</dbReference>
<dbReference type="CDD" id="cd18039">
    <property type="entry name" value="DEXXQc_UPF1"/>
    <property type="match status" value="1"/>
</dbReference>
<dbReference type="CDD" id="cd18808">
    <property type="entry name" value="SF1_C_Upf1"/>
    <property type="match status" value="1"/>
</dbReference>
<dbReference type="CDD" id="cd21400">
    <property type="entry name" value="ZBD_UPF1-like"/>
    <property type="match status" value="1"/>
</dbReference>
<dbReference type="FunFam" id="2.40.30.230:FF:000001">
    <property type="entry name" value="Regulator of nonsense transcripts 1"/>
    <property type="match status" value="1"/>
</dbReference>
<dbReference type="FunFam" id="3.40.50.300:FF:000097">
    <property type="entry name" value="Regulator of nonsense transcripts 1"/>
    <property type="match status" value="1"/>
</dbReference>
<dbReference type="Gene3D" id="2.40.30.230">
    <property type="match status" value="1"/>
</dbReference>
<dbReference type="Gene3D" id="6.10.140.1240">
    <property type="match status" value="1"/>
</dbReference>
<dbReference type="Gene3D" id="3.40.50.300">
    <property type="entry name" value="P-loop containing nucleotide triphosphate hydrolases"/>
    <property type="match status" value="2"/>
</dbReference>
<dbReference type="InterPro" id="IPR045055">
    <property type="entry name" value="DNA2/NAM7-like"/>
</dbReference>
<dbReference type="InterPro" id="IPR041679">
    <property type="entry name" value="DNA2/NAM7-like_C"/>
</dbReference>
<dbReference type="InterPro" id="IPR041677">
    <property type="entry name" value="DNA2/NAM7_AAA_11"/>
</dbReference>
<dbReference type="InterPro" id="IPR027417">
    <property type="entry name" value="P-loop_NTPase"/>
</dbReference>
<dbReference type="InterPro" id="IPR047187">
    <property type="entry name" value="SF1_C_Upf1"/>
</dbReference>
<dbReference type="InterPro" id="IPR040812">
    <property type="entry name" value="UPF1_1B_dom"/>
</dbReference>
<dbReference type="InterPro" id="IPR018999">
    <property type="entry name" value="UPF1_CH/ZBD"/>
</dbReference>
<dbReference type="PANTHER" id="PTHR10887">
    <property type="entry name" value="DNA2/NAM7 HELICASE FAMILY"/>
    <property type="match status" value="1"/>
</dbReference>
<dbReference type="PANTHER" id="PTHR10887:SF364">
    <property type="entry name" value="REGULATOR OF NONSENSE TRANSCRIPTS 1"/>
    <property type="match status" value="1"/>
</dbReference>
<dbReference type="Pfam" id="PF13086">
    <property type="entry name" value="AAA_11"/>
    <property type="match status" value="1"/>
</dbReference>
<dbReference type="Pfam" id="PF13087">
    <property type="entry name" value="AAA_12"/>
    <property type="match status" value="1"/>
</dbReference>
<dbReference type="Pfam" id="PF18141">
    <property type="entry name" value="UPF1_1B_dom"/>
    <property type="match status" value="1"/>
</dbReference>
<dbReference type="Pfam" id="PF09416">
    <property type="entry name" value="UPF1_Zn_bind"/>
    <property type="match status" value="1"/>
</dbReference>
<dbReference type="SUPFAM" id="SSF52540">
    <property type="entry name" value="P-loop containing nucleoside triphosphate hydrolases"/>
    <property type="match status" value="1"/>
</dbReference>
<dbReference type="PROSITE" id="PS51997">
    <property type="entry name" value="UPF1_CH_RICH"/>
    <property type="match status" value="1"/>
</dbReference>
<reference key="1">
    <citation type="journal article" date="2001" name="Mamm. Genome">
        <title>Comparative analysis of human 19p12-13 region in Fugu and mouse.</title>
        <authorList>
            <person name="Clarke D."/>
            <person name="Elgar G."/>
            <person name="Clark M.S."/>
        </authorList>
    </citation>
    <scope>NUCLEOTIDE SEQUENCE [GENOMIC DNA]</scope>
</reference>
<proteinExistence type="inferred from homology"/>
<keyword id="KW-0067">ATP-binding</keyword>
<keyword id="KW-0963">Cytoplasm</keyword>
<keyword id="KW-0347">Helicase</keyword>
<keyword id="KW-0378">Hydrolase</keyword>
<keyword id="KW-0479">Metal-binding</keyword>
<keyword id="KW-0866">Nonsense-mediated mRNA decay</keyword>
<keyword id="KW-0547">Nucleotide-binding</keyword>
<keyword id="KW-1185">Reference proteome</keyword>
<keyword id="KW-0694">RNA-binding</keyword>
<keyword id="KW-0862">Zinc</keyword>
<keyword id="KW-0863">Zinc-finger</keyword>